<evidence type="ECO:0000255" key="1">
    <source>
        <dbReference type="HAMAP-Rule" id="MF_00215"/>
    </source>
</evidence>
<sequence length="306" mass="35738">MANEFINFEKISRKTWQHLHQESQPPLNENELNSIKSLNDRISIKDVTDIYLPLISLIQIYKKSQENLSFSKSIFLQKNISNRPFIIGVSGSVAVGKSTTSRLLQLLLARTFKDSSVELMTTDGFLYPNAVLSSRHMLNKKGFPESYDMERLLDFLDTIKNGQSAEIPVYSHEIYDIVPNKSQIIEVPDFLIIEGINVFQNPQNNRLYMSDFFDFSIYIDADSDYIENWYLERFATLLDLAKNDKQNYYNRFLKLGEKGALDFARDIWKDINLVNLEKYIEPTRSRAELILHKTKNHKIDEIYLKK</sequence>
<organism>
    <name type="scientific">Streptococcus mutans serotype c (strain ATCC 700610 / UA159)</name>
    <dbReference type="NCBI Taxonomy" id="210007"/>
    <lineage>
        <taxon>Bacteria</taxon>
        <taxon>Bacillati</taxon>
        <taxon>Bacillota</taxon>
        <taxon>Bacilli</taxon>
        <taxon>Lactobacillales</taxon>
        <taxon>Streptococcaceae</taxon>
        <taxon>Streptococcus</taxon>
    </lineage>
</organism>
<reference key="1">
    <citation type="journal article" date="2002" name="Proc. Natl. Acad. Sci. U.S.A.">
        <title>Genome sequence of Streptococcus mutans UA159, a cariogenic dental pathogen.</title>
        <authorList>
            <person name="Ajdic D.J."/>
            <person name="McShan W.M."/>
            <person name="McLaughlin R.E."/>
            <person name="Savic G."/>
            <person name="Chang J."/>
            <person name="Carson M.B."/>
            <person name="Primeaux C."/>
            <person name="Tian R."/>
            <person name="Kenton S."/>
            <person name="Jia H.G."/>
            <person name="Lin S.P."/>
            <person name="Qian Y."/>
            <person name="Li S."/>
            <person name="Zhu H."/>
            <person name="Najar F.Z."/>
            <person name="Lai H."/>
            <person name="White J."/>
            <person name="Roe B.A."/>
            <person name="Ferretti J.J."/>
        </authorList>
    </citation>
    <scope>NUCLEOTIDE SEQUENCE [LARGE SCALE GENOMIC DNA]</scope>
    <source>
        <strain>ATCC 700610 / UA159</strain>
    </source>
</reference>
<dbReference type="EC" id="2.7.1.33" evidence="1"/>
<dbReference type="EMBL" id="AE014133">
    <property type="protein sequence ID" value="AAN58819.1"/>
    <property type="molecule type" value="Genomic_DNA"/>
</dbReference>
<dbReference type="RefSeq" id="NP_721513.1">
    <property type="nucleotide sequence ID" value="NC_004350.2"/>
</dbReference>
<dbReference type="RefSeq" id="WP_002262217.1">
    <property type="nucleotide sequence ID" value="NC_004350.2"/>
</dbReference>
<dbReference type="SMR" id="Q8DU31"/>
<dbReference type="STRING" id="210007.SMU_1126"/>
<dbReference type="GeneID" id="93859382"/>
<dbReference type="KEGG" id="smu:SMU_1126"/>
<dbReference type="PATRIC" id="fig|210007.7.peg.1009"/>
<dbReference type="eggNOG" id="COG1072">
    <property type="taxonomic scope" value="Bacteria"/>
</dbReference>
<dbReference type="HOGENOM" id="CLU_053818_1_1_9"/>
<dbReference type="OrthoDB" id="1550976at2"/>
<dbReference type="PhylomeDB" id="Q8DU31"/>
<dbReference type="UniPathway" id="UPA00241">
    <property type="reaction ID" value="UER00352"/>
</dbReference>
<dbReference type="Proteomes" id="UP000002512">
    <property type="component" value="Chromosome"/>
</dbReference>
<dbReference type="GO" id="GO:0005737">
    <property type="term" value="C:cytoplasm"/>
    <property type="evidence" value="ECO:0007669"/>
    <property type="project" value="UniProtKB-SubCell"/>
</dbReference>
<dbReference type="GO" id="GO:0005524">
    <property type="term" value="F:ATP binding"/>
    <property type="evidence" value="ECO:0007669"/>
    <property type="project" value="UniProtKB-UniRule"/>
</dbReference>
<dbReference type="GO" id="GO:0004594">
    <property type="term" value="F:pantothenate kinase activity"/>
    <property type="evidence" value="ECO:0007669"/>
    <property type="project" value="UniProtKB-UniRule"/>
</dbReference>
<dbReference type="GO" id="GO:0015937">
    <property type="term" value="P:coenzyme A biosynthetic process"/>
    <property type="evidence" value="ECO:0007669"/>
    <property type="project" value="UniProtKB-UniRule"/>
</dbReference>
<dbReference type="CDD" id="cd02025">
    <property type="entry name" value="PanK"/>
    <property type="match status" value="1"/>
</dbReference>
<dbReference type="Gene3D" id="3.40.50.300">
    <property type="entry name" value="P-loop containing nucleotide triphosphate hydrolases"/>
    <property type="match status" value="1"/>
</dbReference>
<dbReference type="HAMAP" id="MF_00215">
    <property type="entry name" value="Pantothen_kinase_1"/>
    <property type="match status" value="1"/>
</dbReference>
<dbReference type="InterPro" id="IPR027417">
    <property type="entry name" value="P-loop_NTPase"/>
</dbReference>
<dbReference type="InterPro" id="IPR004566">
    <property type="entry name" value="PanK"/>
</dbReference>
<dbReference type="InterPro" id="IPR006083">
    <property type="entry name" value="PRK/URK"/>
</dbReference>
<dbReference type="NCBIfam" id="TIGR00554">
    <property type="entry name" value="panK_bact"/>
    <property type="match status" value="1"/>
</dbReference>
<dbReference type="PANTHER" id="PTHR10285">
    <property type="entry name" value="URIDINE KINASE"/>
    <property type="match status" value="1"/>
</dbReference>
<dbReference type="Pfam" id="PF00485">
    <property type="entry name" value="PRK"/>
    <property type="match status" value="1"/>
</dbReference>
<dbReference type="PIRSF" id="PIRSF000545">
    <property type="entry name" value="Pantothenate_kin"/>
    <property type="match status" value="1"/>
</dbReference>
<dbReference type="SUPFAM" id="SSF52540">
    <property type="entry name" value="P-loop containing nucleoside triphosphate hydrolases"/>
    <property type="match status" value="1"/>
</dbReference>
<protein>
    <recommendedName>
        <fullName evidence="1">Pantothenate kinase</fullName>
        <ecNumber evidence="1">2.7.1.33</ecNumber>
    </recommendedName>
    <alternativeName>
        <fullName evidence="1">Pantothenic acid kinase</fullName>
    </alternativeName>
</protein>
<accession>Q8DU31</accession>
<gene>
    <name evidence="1" type="primary">coaA</name>
    <name type="ordered locus">SMU_1126</name>
</gene>
<comment type="catalytic activity">
    <reaction evidence="1">
        <text>(R)-pantothenate + ATP = (R)-4'-phosphopantothenate + ADP + H(+)</text>
        <dbReference type="Rhea" id="RHEA:16373"/>
        <dbReference type="ChEBI" id="CHEBI:10986"/>
        <dbReference type="ChEBI" id="CHEBI:15378"/>
        <dbReference type="ChEBI" id="CHEBI:29032"/>
        <dbReference type="ChEBI" id="CHEBI:30616"/>
        <dbReference type="ChEBI" id="CHEBI:456216"/>
        <dbReference type="EC" id="2.7.1.33"/>
    </reaction>
</comment>
<comment type="pathway">
    <text evidence="1">Cofactor biosynthesis; coenzyme A biosynthesis; CoA from (R)-pantothenate: step 1/5.</text>
</comment>
<comment type="subcellular location">
    <subcellularLocation>
        <location evidence="1">Cytoplasm</location>
    </subcellularLocation>
</comment>
<comment type="similarity">
    <text evidence="1">Belongs to the prokaryotic pantothenate kinase family.</text>
</comment>
<feature type="chain" id="PRO_0000194453" description="Pantothenate kinase">
    <location>
        <begin position="1"/>
        <end position="306"/>
    </location>
</feature>
<feature type="binding site" evidence="1">
    <location>
        <begin position="91"/>
        <end position="98"/>
    </location>
    <ligand>
        <name>ATP</name>
        <dbReference type="ChEBI" id="CHEBI:30616"/>
    </ligand>
</feature>
<keyword id="KW-0067">ATP-binding</keyword>
<keyword id="KW-0173">Coenzyme A biosynthesis</keyword>
<keyword id="KW-0963">Cytoplasm</keyword>
<keyword id="KW-0418">Kinase</keyword>
<keyword id="KW-0547">Nucleotide-binding</keyword>
<keyword id="KW-1185">Reference proteome</keyword>
<keyword id="KW-0808">Transferase</keyword>
<proteinExistence type="inferred from homology"/>
<name>COAA_STRMU</name>